<name>FWDC_METMP</name>
<feature type="chain" id="PRO_0000408198" description="Tungsten-containing formylmethanofuran dehydrogenase 2 subunit C">
    <location>
        <begin position="1"/>
        <end position="272"/>
    </location>
</feature>
<feature type="repeat" description="1">
    <location>
        <begin position="77"/>
        <end position="89"/>
    </location>
</feature>
<feature type="repeat" description="2">
    <location>
        <begin position="96"/>
        <end position="108"/>
    </location>
</feature>
<feature type="repeat" description="3">
    <location>
        <begin position="115"/>
        <end position="127"/>
    </location>
</feature>
<feature type="repeat" description="4">
    <location>
        <begin position="141"/>
        <end position="153"/>
    </location>
</feature>
<feature type="repeat" description="5">
    <location>
        <begin position="160"/>
        <end position="172"/>
    </location>
</feature>
<feature type="repeat" description="6">
    <location>
        <begin position="179"/>
        <end position="191"/>
    </location>
</feature>
<feature type="repeat" description="7">
    <location>
        <begin position="198"/>
        <end position="210"/>
    </location>
</feature>
<feature type="region of interest" description="7 X 13 AA repeats of [GW]-X-X-[MLP]-X-X-G-X-[IL]-X-[IV]-X-G">
    <location>
        <begin position="77"/>
        <end position="210"/>
    </location>
</feature>
<organism>
    <name type="scientific">Methanococcus maripaludis (strain DSM 14266 / JCM 13030 / NBRC 101832 / S2 / LL)</name>
    <dbReference type="NCBI Taxonomy" id="267377"/>
    <lineage>
        <taxon>Archaea</taxon>
        <taxon>Methanobacteriati</taxon>
        <taxon>Methanobacteriota</taxon>
        <taxon>Methanomada group</taxon>
        <taxon>Methanococci</taxon>
        <taxon>Methanococcales</taxon>
        <taxon>Methanococcaceae</taxon>
        <taxon>Methanococcus</taxon>
    </lineage>
</organism>
<reference key="1">
    <citation type="journal article" date="2004" name="J. Bacteriol.">
        <title>Complete genome sequence of the genetically tractable hydrogenotrophic methanogen Methanococcus maripaludis.</title>
        <authorList>
            <person name="Hendrickson E.L."/>
            <person name="Kaul R."/>
            <person name="Zhou Y."/>
            <person name="Bovee D."/>
            <person name="Chapman P."/>
            <person name="Chung J."/>
            <person name="Conway de Macario E."/>
            <person name="Dodsworth J.A."/>
            <person name="Gillett W."/>
            <person name="Graham D.E."/>
            <person name="Hackett M."/>
            <person name="Haydock A.K."/>
            <person name="Kang A."/>
            <person name="Land M.L."/>
            <person name="Levy R."/>
            <person name="Lie T.J."/>
            <person name="Major T.A."/>
            <person name="Moore B.C."/>
            <person name="Porat I."/>
            <person name="Palmeiri A."/>
            <person name="Rouse G."/>
            <person name="Saenphimmachak C."/>
            <person name="Soell D."/>
            <person name="Van Dien S."/>
            <person name="Wang T."/>
            <person name="Whitman W.B."/>
            <person name="Xia Q."/>
            <person name="Zhang Y."/>
            <person name="Larimer F.W."/>
            <person name="Olson M.V."/>
            <person name="Leigh J.A."/>
        </authorList>
    </citation>
    <scope>NUCLEOTIDE SEQUENCE [LARGE SCALE GENOMIC DNA]</scope>
    <source>
        <strain>DSM 14266 / JCM 13030 / NBRC 101832 / S2 / LL</strain>
    </source>
</reference>
<keyword id="KW-0484">Methanogenesis</keyword>
<keyword id="KW-0560">Oxidoreductase</keyword>
<keyword id="KW-1185">Reference proteome</keyword>
<keyword id="KW-0677">Repeat</keyword>
<accession>P0CW43</accession>
<accession>O31112</accession>
<dbReference type="EC" id="1.2.7.12" evidence="2"/>
<dbReference type="EMBL" id="BX950229">
    <property type="protein sequence ID" value="CAF30805.1"/>
    <property type="molecule type" value="Genomic_DNA"/>
</dbReference>
<dbReference type="RefSeq" id="WP_011171193.1">
    <property type="nucleotide sequence ID" value="NC_005791.1"/>
</dbReference>
<dbReference type="SMR" id="P0CW43"/>
<dbReference type="STRING" id="267377.MMP1249"/>
<dbReference type="EnsemblBacteria" id="CAF30805">
    <property type="protein sequence ID" value="CAF30805"/>
    <property type="gene ID" value="MMP1249"/>
</dbReference>
<dbReference type="GeneID" id="2762780"/>
<dbReference type="KEGG" id="mmp:MMP1249"/>
<dbReference type="PATRIC" id="fig|267377.15.peg.1282"/>
<dbReference type="eggNOG" id="arCOG00097">
    <property type="taxonomic scope" value="Archaea"/>
</dbReference>
<dbReference type="HOGENOM" id="CLU_072248_0_0_2"/>
<dbReference type="OrthoDB" id="106216at2157"/>
<dbReference type="UniPathway" id="UPA00640">
    <property type="reaction ID" value="UER00692"/>
</dbReference>
<dbReference type="Proteomes" id="UP000000590">
    <property type="component" value="Chromosome"/>
</dbReference>
<dbReference type="GO" id="GO:0018493">
    <property type="term" value="F:formylmethanofuran dehydrogenase activity"/>
    <property type="evidence" value="ECO:0007669"/>
    <property type="project" value="UniProtKB-EC"/>
</dbReference>
<dbReference type="GO" id="GO:0046914">
    <property type="term" value="F:transition metal ion binding"/>
    <property type="evidence" value="ECO:0007669"/>
    <property type="project" value="InterPro"/>
</dbReference>
<dbReference type="GO" id="GO:0019386">
    <property type="term" value="P:methanogenesis, from carbon dioxide"/>
    <property type="evidence" value="ECO:0007669"/>
    <property type="project" value="UniProtKB-UniPathway"/>
</dbReference>
<dbReference type="CDD" id="cd00980">
    <property type="entry name" value="FwdC/FmdC"/>
    <property type="match status" value="1"/>
</dbReference>
<dbReference type="Gene3D" id="2.160.20.60">
    <property type="entry name" value="Glutamate synthase, alpha subunit, C-terminal domain"/>
    <property type="match status" value="1"/>
</dbReference>
<dbReference type="InterPro" id="IPR054942">
    <property type="entry name" value="FMH_DH_FwdC"/>
</dbReference>
<dbReference type="InterPro" id="IPR017550">
    <property type="entry name" value="Formylmethanofuran_DH_suC"/>
</dbReference>
<dbReference type="InterPro" id="IPR002489">
    <property type="entry name" value="Glu_synth_asu_C"/>
</dbReference>
<dbReference type="InterPro" id="IPR036485">
    <property type="entry name" value="Glu_synth_asu_C_sf"/>
</dbReference>
<dbReference type="NCBIfam" id="NF042910">
    <property type="entry name" value="FMH_DH_FwdC"/>
    <property type="match status" value="1"/>
</dbReference>
<dbReference type="NCBIfam" id="TIGR03122">
    <property type="entry name" value="one_C_dehyd_C"/>
    <property type="match status" value="1"/>
</dbReference>
<dbReference type="PANTHER" id="PTHR39673">
    <property type="entry name" value="TUNGSTEN FORMYLMETHANOFURAN DEHYDROGENASE, SUBUNIT C (FWDC)"/>
    <property type="match status" value="1"/>
</dbReference>
<dbReference type="PANTHER" id="PTHR39673:SF5">
    <property type="entry name" value="TUNGSTEN-CONTAINING FORMYLMETHANOFURAN DEHYDROGENASE 2 SUBUNIT C"/>
    <property type="match status" value="1"/>
</dbReference>
<dbReference type="Pfam" id="PF01493">
    <property type="entry name" value="GXGXG"/>
    <property type="match status" value="1"/>
</dbReference>
<dbReference type="SUPFAM" id="SSF69336">
    <property type="entry name" value="Alpha subunit of glutamate synthase, C-terminal domain"/>
    <property type="match status" value="1"/>
</dbReference>
<evidence type="ECO:0000250" key="1"/>
<evidence type="ECO:0000250" key="2">
    <source>
        <dbReference type="UniProtKB" id="Q48943"/>
    </source>
</evidence>
<evidence type="ECO:0000305" key="3"/>
<gene>
    <name type="primary">fwdC</name>
    <name type="ordered locus">MMP1249</name>
</gene>
<proteinExistence type="inferred from homology"/>
<comment type="function">
    <text evidence="2">Catalyzes the reversible oxidation of CO(2) and methanofuran (MFR) to N-formylmethanofuran (CHO-MFR). This enzyme is oxygen-labile.</text>
</comment>
<comment type="catalytic activity">
    <reaction evidence="2">
        <text>N-formylmethanofuran + 2 oxidized [2Fe-2S]-[ferredoxin] + H2O = methanofuran + 2 reduced [2Fe-2S]-[ferredoxin] + CO2 + H(+)</text>
        <dbReference type="Rhea" id="RHEA:19841"/>
        <dbReference type="Rhea" id="RHEA-COMP:10000"/>
        <dbReference type="Rhea" id="RHEA-COMP:10001"/>
        <dbReference type="ChEBI" id="CHEBI:15377"/>
        <dbReference type="ChEBI" id="CHEBI:15378"/>
        <dbReference type="ChEBI" id="CHEBI:16526"/>
        <dbReference type="ChEBI" id="CHEBI:33737"/>
        <dbReference type="ChEBI" id="CHEBI:33738"/>
        <dbReference type="ChEBI" id="CHEBI:57727"/>
        <dbReference type="ChEBI" id="CHEBI:58151"/>
        <dbReference type="EC" id="1.2.7.12"/>
    </reaction>
</comment>
<comment type="pathway">
    <text>One-carbon metabolism; methanogenesis from CO(2); 5,10-methenyl-5,6,7,8-tetrahydromethanopterin from CO(2): step 1/3.</text>
</comment>
<comment type="subunit">
    <text evidence="1">This enzyme is composed of seven subunits fwdA (65 kDa), fwdB (53 kDa), fwdC (31 kDa), fwdD (15 kDa), fwdE, fwdF and fwdG.</text>
</comment>
<comment type="similarity">
    <text evidence="3">Belongs to the FwdC/FmdC family.</text>
</comment>
<sequence>MNELILNLKGDVSVPVEMDKILPEKIQEMSLEEISGIELIQGNKTAKVSEIFDVELKESDVAKVTINNCCKKVKRIGEKMTSGEIVVNGDAGMYIGVEMKGGKITVNGDAESWVGQNLKGGEIIINGNAENYVGSAYRGDWRGMSGGKITITGNAGSELGEYLKGGTIVIKGNTKIMPGIHQNGGMIIIEGDIEGRAGGEMMKGAIVVYGKILEPLPSFKFEGIVEDPLVKLSKKDAGTQLKGTFIKFSGDYVNTKPKGQLYAAIENNKNLI</sequence>
<protein>
    <recommendedName>
        <fullName>Tungsten-containing formylmethanofuran dehydrogenase 2 subunit C</fullName>
        <ecNumber evidence="2">1.2.7.12</ecNumber>
    </recommendedName>
    <alternativeName>
        <fullName>Tungsten-containing formylmethanofuran dehydrogenase II subunit C</fullName>
    </alternativeName>
</protein>